<accession>Q8IW19</accession>
<accession>A8K476</accession>
<accession>Q53P47</accession>
<accession>Q53PB9</accession>
<accession>Q53QU0</accession>
<feature type="chain" id="PRO_0000089342" description="Aprataxin and PNK-like factor">
    <location>
        <begin position="1"/>
        <end position="511"/>
    </location>
</feature>
<feature type="domain" description="FHA-like">
    <location>
        <begin position="1"/>
        <end position="108"/>
    </location>
</feature>
<feature type="zinc finger region" description="PBZ-type 1">
    <location>
        <begin position="377"/>
        <end position="398"/>
    </location>
</feature>
<feature type="zinc finger region" description="PBZ-type 2">
    <location>
        <begin position="419"/>
        <end position="440"/>
    </location>
</feature>
<feature type="region of interest" description="Disordered" evidence="3">
    <location>
        <begin position="223"/>
        <end position="370"/>
    </location>
</feature>
<feature type="region of interest" description="Flexible linker" evidence="21">
    <location>
        <begin position="406"/>
        <end position="416"/>
    </location>
</feature>
<feature type="region of interest" description="Disordered" evidence="11">
    <location>
        <begin position="449"/>
        <end position="497"/>
    </location>
</feature>
<feature type="coiled-coil region" evidence="2">
    <location>
        <begin position="487"/>
        <end position="511"/>
    </location>
</feature>
<feature type="short sequence motif" description="KBM" evidence="12 13">
    <location>
        <begin position="182"/>
        <end position="191"/>
    </location>
</feature>
<feature type="short sequence motif" description="NAP1L motif" evidence="11">
    <location>
        <begin position="476"/>
        <end position="500"/>
    </location>
</feature>
<feature type="compositionally biased region" description="Polar residues" evidence="3">
    <location>
        <begin position="225"/>
        <end position="249"/>
    </location>
</feature>
<feature type="compositionally biased region" description="Polar residues" evidence="3">
    <location>
        <begin position="263"/>
        <end position="293"/>
    </location>
</feature>
<feature type="compositionally biased region" description="Basic residues" evidence="3">
    <location>
        <begin position="304"/>
        <end position="315"/>
    </location>
</feature>
<feature type="compositionally biased region" description="Polar residues" evidence="3">
    <location>
        <begin position="324"/>
        <end position="344"/>
    </location>
</feature>
<feature type="compositionally biased region" description="Low complexity" evidence="3">
    <location>
        <begin position="345"/>
        <end position="355"/>
    </location>
</feature>
<feature type="compositionally biased region" description="Acidic residues" evidence="3">
    <location>
        <begin position="468"/>
        <end position="497"/>
    </location>
</feature>
<feature type="binding site" evidence="8">
    <location>
        <position position="376"/>
    </location>
    <ligand>
        <name>a glycoprotein</name>
        <dbReference type="ChEBI" id="CHEBI:17089"/>
    </ligand>
    <ligandPart>
        <name>poly[(1''-&gt;2')-ADP-alpha-D-ribose] group</name>
        <dbReference type="ChEBI" id="CHEBI:157741"/>
    </ligandPart>
</feature>
<feature type="binding site" evidence="8">
    <location>
        <position position="381"/>
    </location>
    <ligand>
        <name>a glycoprotein</name>
        <dbReference type="ChEBI" id="CHEBI:17089"/>
    </ligand>
    <ligandPart>
        <name>poly[(1''-&gt;2')-ADP-alpha-D-ribose] group</name>
        <dbReference type="ChEBI" id="CHEBI:157741"/>
    </ligandPart>
</feature>
<feature type="binding site" evidence="8">
    <location>
        <position position="386"/>
    </location>
    <ligand>
        <name>a glycoprotein</name>
        <dbReference type="ChEBI" id="CHEBI:17089"/>
    </ligand>
    <ligandPart>
        <name>poly[(1''-&gt;2')-ADP-alpha-D-ribose] group</name>
        <dbReference type="ChEBI" id="CHEBI:157741"/>
    </ligandPart>
</feature>
<feature type="binding site" evidence="8">
    <location>
        <position position="387"/>
    </location>
    <ligand>
        <name>a glycoprotein</name>
        <dbReference type="ChEBI" id="CHEBI:17089"/>
    </ligand>
    <ligandPart>
        <name>poly[(1''-&gt;2')-ADP-alpha-D-ribose] group</name>
        <dbReference type="ChEBI" id="CHEBI:157741"/>
    </ligandPart>
</feature>
<feature type="binding site" evidence="8">
    <location>
        <position position="423"/>
    </location>
    <ligand>
        <name>a glycoprotein</name>
        <dbReference type="ChEBI" id="CHEBI:17089"/>
    </ligand>
    <ligandPart>
        <name>poly[(1''-&gt;2')-ADP-alpha-D-ribose] group</name>
        <dbReference type="ChEBI" id="CHEBI:157741"/>
    </ligandPart>
</feature>
<feature type="binding site" evidence="8">
    <location>
        <position position="428"/>
    </location>
    <ligand>
        <name>a glycoprotein</name>
        <dbReference type="ChEBI" id="CHEBI:17089"/>
    </ligand>
    <ligandPart>
        <name>poly[(1''-&gt;2')-ADP-alpha-D-ribose] group</name>
        <dbReference type="ChEBI" id="CHEBI:157741"/>
    </ligandPart>
</feature>
<feature type="binding site" evidence="8">
    <location>
        <position position="429"/>
    </location>
    <ligand>
        <name>a glycoprotein</name>
        <dbReference type="ChEBI" id="CHEBI:17089"/>
    </ligand>
    <ligandPart>
        <name>poly[(1''-&gt;2')-ADP-alpha-D-ribose] group</name>
        <dbReference type="ChEBI" id="CHEBI:157741"/>
    </ligandPart>
</feature>
<feature type="modified residue" description="Phosphoserine; by ATM" evidence="6">
    <location>
        <position position="116"/>
    </location>
</feature>
<feature type="modified residue" description="Phosphoserine" evidence="1">
    <location>
        <position position="149"/>
    </location>
</feature>
<feature type="sequence variant" id="VAR_032299" description="In dbSNP:rs11902811.">
    <original>I</original>
    <variation>V</variation>
    <location>
        <position position="100"/>
    </location>
</feature>
<feature type="sequence variant" id="VAR_061557" description="In dbSNP:rs35002937.">
    <original>S</original>
    <variation>T</variation>
    <location>
        <position position="224"/>
    </location>
</feature>
<feature type="sequence variant" id="VAR_032300" description="In dbSNP:rs13404469.">
    <original>L</original>
    <variation>F</variation>
    <location>
        <position position="336"/>
    </location>
</feature>
<feature type="mutagenesis site" description="Does not affect interaction with XRCC5 and XRCC6; decreased ability to promote non-homologous end-joining (NHEJ)." evidence="12">
    <original>R</original>
    <variation>A</variation>
    <location>
        <position position="27"/>
    </location>
</feature>
<feature type="mutagenesis site" description="Decreases phosphorylation by ATM." evidence="6">
    <original>S</original>
    <variation>A</variation>
    <location>
        <position position="116"/>
    </location>
</feature>
<feature type="mutagenesis site" description="Abolished interaction with XRCC5 and XRCC6." evidence="12">
    <original>RKR</original>
    <variation>AKA</variation>
    <location>
        <begin position="182"/>
        <end position="184"/>
    </location>
</feature>
<feature type="mutagenesis site" description="Reduced interaction with XRCC5 and XRCC6; impaired localization to the nucleus." evidence="12">
    <original>R</original>
    <variation>A</variation>
    <location>
        <position position="182"/>
    </location>
</feature>
<feature type="mutagenesis site" description="Abolished interaction with XRCC5 and XRCC6; impaired localization to the nucleus." evidence="12">
    <original>R</original>
    <variation>A</variation>
    <location>
        <position position="184"/>
    </location>
</feature>
<feature type="mutagenesis site" description="Abolished interaction with XRCC5 and XRCC6." evidence="12">
    <original>WML</original>
    <variation>AAA</variation>
    <location>
        <begin position="189"/>
        <end position="191"/>
    </location>
</feature>
<feature type="mutagenesis site" description="Abolished interaction with XRCC5 and XRCC6; impaired localization to the nucleus; decreased ability to promote non-homologous end-joining (NHEJ)." evidence="12">
    <original>W</original>
    <variation>A</variation>
    <location>
        <position position="189"/>
    </location>
</feature>
<feature type="mutagenesis site" description="Reduced interaction with XRCC5 and XRCC6." evidence="12">
    <original>M</original>
    <variation>A</variation>
    <location>
        <position position="190"/>
    </location>
</feature>
<feature type="mutagenesis site" description="Does not affect interaction with XRCC5 and XRCC6." evidence="12">
    <original>L</original>
    <variation>A</variation>
    <location>
        <position position="191"/>
    </location>
</feature>
<feature type="mutagenesis site" description="Abolishes poly(ADP-ribose)-binding and poly-ADP-ribosylation by PARP1; when associated with A-421 and A-427. Does not affect histone chaperone activity; when associated with A-421 and A-427." evidence="8 11">
    <original>R</original>
    <variation>A</variation>
    <location>
        <position position="376"/>
    </location>
</feature>
<feature type="mutagenesis site" description="Abolishes poly(ADP-ribose)-binding and poly-ADP-ribosylation by PARP1; when associated with A-385; A-421 and A-427. Does not affect histone chaperone activity; when associated with A-385; A-421 and A-427." evidence="8 11">
    <original>C</original>
    <variation>A</variation>
    <location>
        <position position="379"/>
    </location>
</feature>
<feature type="mutagenesis site" description="Abolishes poly(ADP-ribose)-binding and poly-ADP-ribosylation by PARP1; when associated with A-379; A-421 and A-427. Does not affect histone chaperone activity; when associated with A-379; A-421 and A-427." evidence="8 11">
    <original>C</original>
    <variation>A</variation>
    <location>
        <position position="385"/>
    </location>
</feature>
<feature type="mutagenesis site" description="Abolishes poly(ADP-ribose)-binding and poly-ADP-ribosylation by PARP1; when associated with A-379; A-385 and A-427. Abolishes poly(ADP-ribose)-binding and poly-ADP-ribosylation by PARP1; when associated with A-376 and A-427. Does not affect histone chaperone activity; when associated with A-376 and A-427." evidence="8 11">
    <original>C</original>
    <variation>A</variation>
    <location>
        <position position="421"/>
    </location>
</feature>
<feature type="mutagenesis site" description="Abolishes poly(ADP-ribose)-binding and poly-ADP-ribosylation by PARP1; when associated with A-379; A-385 and A-421. Abolishes poly(ADP-ribose)-binding and poly-ADP-ribosylation by PARP1; when associated with A-376 and A-421. Does not affect histone chaperone activity; when associated with A-376 and A-421." evidence="8 11">
    <original>C</original>
    <variation>A</variation>
    <location>
        <position position="427"/>
    </location>
</feature>
<feature type="mutagenesis site" description="Impaired binding to histones and ability to mediate histone chaperone activity." evidence="11 14">
    <original>E</original>
    <variation>A</variation>
    <location>
        <position position="477"/>
    </location>
</feature>
<feature type="mutagenesis site" description="Impaired binding to histones and ability to mediate histone chaperone activity." evidence="11 14">
    <original>W</original>
    <variation>A</variation>
    <location>
        <position position="485"/>
    </location>
</feature>
<feature type="sequence conflict" description="In Ref. 1; BAF83530." evidence="20" ref="1">
    <location>
        <position position="313"/>
    </location>
</feature>
<feature type="strand" evidence="29">
    <location>
        <begin position="4"/>
        <end position="9"/>
    </location>
</feature>
<feature type="strand" evidence="29">
    <location>
        <begin position="16"/>
        <end position="18"/>
    </location>
</feature>
<feature type="strand" evidence="29">
    <location>
        <begin position="20"/>
        <end position="28"/>
    </location>
</feature>
<feature type="turn" evidence="29">
    <location>
        <begin position="29"/>
        <end position="32"/>
    </location>
</feature>
<feature type="strand" evidence="29">
    <location>
        <begin position="43"/>
        <end position="48"/>
    </location>
</feature>
<feature type="strand" evidence="29">
    <location>
        <begin position="51"/>
        <end position="56"/>
    </location>
</feature>
<feature type="strand" evidence="29">
    <location>
        <begin position="58"/>
        <end position="60"/>
    </location>
</feature>
<feature type="strand" evidence="29">
    <location>
        <begin position="63"/>
        <end position="65"/>
    </location>
</feature>
<feature type="strand" evidence="28">
    <location>
        <begin position="81"/>
        <end position="83"/>
    </location>
</feature>
<feature type="strand" evidence="29">
    <location>
        <begin position="88"/>
        <end position="92"/>
    </location>
</feature>
<feature type="strand" evidence="29">
    <location>
        <begin position="95"/>
        <end position="102"/>
    </location>
</feature>
<feature type="helix" evidence="30">
    <location>
        <begin position="188"/>
        <end position="191"/>
    </location>
</feature>
<feature type="strand" evidence="26">
    <location>
        <begin position="371"/>
        <end position="374"/>
    </location>
</feature>
<feature type="turn" evidence="26">
    <location>
        <begin position="380"/>
        <end position="383"/>
    </location>
</feature>
<feature type="helix" evidence="26">
    <location>
        <begin position="392"/>
        <end position="395"/>
    </location>
</feature>
<feature type="turn" evidence="26">
    <location>
        <begin position="412"/>
        <end position="414"/>
    </location>
</feature>
<feature type="helix" evidence="27">
    <location>
        <begin position="424"/>
        <end position="426"/>
    </location>
</feature>
<feature type="helix" evidence="27">
    <location>
        <begin position="432"/>
        <end position="437"/>
    </location>
</feature>
<dbReference type="EC" id="3.1.-.-" evidence="5"/>
<dbReference type="EMBL" id="AK290841">
    <property type="protein sequence ID" value="BAF83530.1"/>
    <property type="molecule type" value="mRNA"/>
</dbReference>
<dbReference type="EMBL" id="AC105054">
    <property type="protein sequence ID" value="AAY24113.1"/>
    <property type="molecule type" value="Genomic_DNA"/>
</dbReference>
<dbReference type="EMBL" id="AC127383">
    <property type="protein sequence ID" value="AAY24008.1"/>
    <property type="molecule type" value="Genomic_DNA"/>
</dbReference>
<dbReference type="EMBL" id="AC130709">
    <property type="protein sequence ID" value="AAY14945.1"/>
    <property type="status" value="ALT_INIT"/>
    <property type="molecule type" value="Genomic_DNA"/>
</dbReference>
<dbReference type="EMBL" id="BC041144">
    <property type="protein sequence ID" value="AAH41144.1"/>
    <property type="molecule type" value="mRNA"/>
</dbReference>
<dbReference type="CCDS" id="CCDS1888.1"/>
<dbReference type="RefSeq" id="NP_775816.1">
    <property type="nucleotide sequence ID" value="NM_173545.3"/>
</dbReference>
<dbReference type="PDB" id="2KQB">
    <property type="method" value="NMR"/>
    <property type="chains" value="A=368-451"/>
</dbReference>
<dbReference type="PDB" id="2KQC">
    <property type="method" value="NMR"/>
    <property type="chains" value="A=368-451"/>
</dbReference>
<dbReference type="PDB" id="2KQD">
    <property type="method" value="NMR"/>
    <property type="chains" value="A=368-451"/>
</dbReference>
<dbReference type="PDB" id="2KQE">
    <property type="method" value="NMR"/>
    <property type="chains" value="A=368-451"/>
</dbReference>
<dbReference type="PDB" id="2KUO">
    <property type="method" value="NMR"/>
    <property type="chains" value="A=360-448"/>
</dbReference>
<dbReference type="PDB" id="5E50">
    <property type="method" value="X-ray"/>
    <property type="resolution" value="1.38 A"/>
    <property type="chains" value="A/B=1-105"/>
</dbReference>
<dbReference type="PDB" id="5W7W">
    <property type="method" value="X-ray"/>
    <property type="resolution" value="1.35 A"/>
    <property type="chains" value="A/T=1-105"/>
</dbReference>
<dbReference type="PDB" id="5W7X">
    <property type="method" value="X-ray"/>
    <property type="resolution" value="2.00 A"/>
    <property type="chains" value="A/B/C/D=1-105"/>
</dbReference>
<dbReference type="PDB" id="5W7Y">
    <property type="method" value="X-ray"/>
    <property type="resolution" value="2.10 A"/>
    <property type="chains" value="A/B=1-105"/>
</dbReference>
<dbReference type="PDB" id="6ERF">
    <property type="method" value="X-ray"/>
    <property type="resolution" value="3.01 A"/>
    <property type="chains" value="Q/R/S/T=174-191"/>
</dbReference>
<dbReference type="PDB" id="6TYT">
    <property type="method" value="X-ray"/>
    <property type="resolution" value="2.40 A"/>
    <property type="chains" value="C=179-194"/>
</dbReference>
<dbReference type="PDB" id="6TYW">
    <property type="method" value="X-ray"/>
    <property type="resolution" value="1.70 A"/>
    <property type="chains" value="B=179-194"/>
</dbReference>
<dbReference type="PDB" id="6TYZ">
    <property type="method" value="X-ray"/>
    <property type="resolution" value="1.51 A"/>
    <property type="chains" value="B=179-194"/>
</dbReference>
<dbReference type="PDB" id="6YN1">
    <property type="method" value="X-ray"/>
    <property type="resolution" value="2.35 A"/>
    <property type="chains" value="E/J/O/T/Y/d/i/n=449-490"/>
</dbReference>
<dbReference type="PDBsum" id="2KQB"/>
<dbReference type="PDBsum" id="2KQC"/>
<dbReference type="PDBsum" id="2KQD"/>
<dbReference type="PDBsum" id="2KQE"/>
<dbReference type="PDBsum" id="2KUO"/>
<dbReference type="PDBsum" id="5E50"/>
<dbReference type="PDBsum" id="5W7W"/>
<dbReference type="PDBsum" id="5W7X"/>
<dbReference type="PDBsum" id="5W7Y"/>
<dbReference type="PDBsum" id="6ERF"/>
<dbReference type="PDBsum" id="6TYT"/>
<dbReference type="PDBsum" id="6TYW"/>
<dbReference type="PDBsum" id="6TYZ"/>
<dbReference type="PDBsum" id="6YN1"/>
<dbReference type="BMRB" id="Q8IW19"/>
<dbReference type="SASBDB" id="Q8IW19"/>
<dbReference type="SMR" id="Q8IW19"/>
<dbReference type="BioGRID" id="128334">
    <property type="interactions" value="43"/>
</dbReference>
<dbReference type="ComplexPortal" id="CPX-793">
    <property type="entry name" value="XRCC1 DNA repair complex"/>
</dbReference>
<dbReference type="DIP" id="DIP-39136N"/>
<dbReference type="FunCoup" id="Q8IW19">
    <property type="interactions" value="2396"/>
</dbReference>
<dbReference type="IntAct" id="Q8IW19">
    <property type="interactions" value="36"/>
</dbReference>
<dbReference type="MINT" id="Q8IW19"/>
<dbReference type="STRING" id="9606.ENSP00000307004"/>
<dbReference type="GlyGen" id="Q8IW19">
    <property type="glycosylation" value="1 site, 1 O-linked glycan (1 site)"/>
</dbReference>
<dbReference type="iPTMnet" id="Q8IW19"/>
<dbReference type="PhosphoSitePlus" id="Q8IW19"/>
<dbReference type="BioMuta" id="APLF"/>
<dbReference type="DMDM" id="73619699"/>
<dbReference type="jPOST" id="Q8IW19"/>
<dbReference type="MassIVE" id="Q8IW19"/>
<dbReference type="PaxDb" id="9606-ENSP00000307004"/>
<dbReference type="PeptideAtlas" id="Q8IW19"/>
<dbReference type="ProteomicsDB" id="70796"/>
<dbReference type="Pumba" id="Q8IW19"/>
<dbReference type="Antibodypedia" id="30942">
    <property type="antibodies" value="265 antibodies from 27 providers"/>
</dbReference>
<dbReference type="DNASU" id="200558"/>
<dbReference type="Ensembl" id="ENST00000303795.9">
    <property type="protein sequence ID" value="ENSP00000307004.4"/>
    <property type="gene ID" value="ENSG00000169621.11"/>
</dbReference>
<dbReference type="GeneID" id="200558"/>
<dbReference type="KEGG" id="hsa:200558"/>
<dbReference type="MANE-Select" id="ENST00000303795.9">
    <property type="protein sequence ID" value="ENSP00000307004.4"/>
    <property type="RefSeq nucleotide sequence ID" value="NM_173545.3"/>
    <property type="RefSeq protein sequence ID" value="NP_775816.1"/>
</dbReference>
<dbReference type="UCSC" id="uc002sep.4">
    <property type="organism name" value="human"/>
</dbReference>
<dbReference type="AGR" id="HGNC:28724"/>
<dbReference type="CTD" id="200558"/>
<dbReference type="DisGeNET" id="200558"/>
<dbReference type="GeneCards" id="APLF"/>
<dbReference type="HGNC" id="HGNC:28724">
    <property type="gene designation" value="APLF"/>
</dbReference>
<dbReference type="HPA" id="ENSG00000169621">
    <property type="expression patterns" value="Low tissue specificity"/>
</dbReference>
<dbReference type="MIM" id="611035">
    <property type="type" value="gene"/>
</dbReference>
<dbReference type="neXtProt" id="NX_Q8IW19"/>
<dbReference type="OpenTargets" id="ENSG00000169621"/>
<dbReference type="PharmGKB" id="PA164715842"/>
<dbReference type="VEuPathDB" id="HostDB:ENSG00000169621"/>
<dbReference type="eggNOG" id="ENOG502R7QZ">
    <property type="taxonomic scope" value="Eukaryota"/>
</dbReference>
<dbReference type="GeneTree" id="ENSGT00390000010591"/>
<dbReference type="HOGENOM" id="CLU_043152_0_0_1"/>
<dbReference type="InParanoid" id="Q8IW19"/>
<dbReference type="OrthoDB" id="10256774at2759"/>
<dbReference type="PAN-GO" id="Q8IW19">
    <property type="GO annotations" value="4 GO annotations based on evolutionary models"/>
</dbReference>
<dbReference type="PhylomeDB" id="Q8IW19"/>
<dbReference type="TreeFam" id="TF326160"/>
<dbReference type="PathwayCommons" id="Q8IW19"/>
<dbReference type="SignaLink" id="Q8IW19"/>
<dbReference type="BioGRID-ORCS" id="200558">
    <property type="hits" value="9 hits in 1152 CRISPR screens"/>
</dbReference>
<dbReference type="ChiTaRS" id="APLF">
    <property type="organism name" value="human"/>
</dbReference>
<dbReference type="EvolutionaryTrace" id="Q8IW19"/>
<dbReference type="GenomeRNAi" id="200558"/>
<dbReference type="Pharos" id="Q8IW19">
    <property type="development level" value="Tbio"/>
</dbReference>
<dbReference type="PRO" id="PR:Q8IW19"/>
<dbReference type="Proteomes" id="UP000005640">
    <property type="component" value="Chromosome 2"/>
</dbReference>
<dbReference type="RNAct" id="Q8IW19">
    <property type="molecule type" value="protein"/>
</dbReference>
<dbReference type="Bgee" id="ENSG00000169621">
    <property type="expression patterns" value="Expressed in calcaneal tendon and 110 other cell types or tissues"/>
</dbReference>
<dbReference type="ExpressionAtlas" id="Q8IW19">
    <property type="expression patterns" value="baseline and differential"/>
</dbReference>
<dbReference type="GO" id="GO:0005829">
    <property type="term" value="C:cytosol"/>
    <property type="evidence" value="ECO:0007669"/>
    <property type="project" value="UniProtKB-SubCell"/>
</dbReference>
<dbReference type="GO" id="GO:0005654">
    <property type="term" value="C:nucleoplasm"/>
    <property type="evidence" value="ECO:0000314"/>
    <property type="project" value="HPA"/>
</dbReference>
<dbReference type="GO" id="GO:0005634">
    <property type="term" value="C:nucleus"/>
    <property type="evidence" value="ECO:0000314"/>
    <property type="project" value="UniProtKB"/>
</dbReference>
<dbReference type="GO" id="GO:0090734">
    <property type="term" value="C:site of DNA damage"/>
    <property type="evidence" value="ECO:0000314"/>
    <property type="project" value="UniProtKB"/>
</dbReference>
<dbReference type="GO" id="GO:0035861">
    <property type="term" value="C:site of double-strand break"/>
    <property type="evidence" value="ECO:0000314"/>
    <property type="project" value="UniProtKB"/>
</dbReference>
<dbReference type="GO" id="GO:0008408">
    <property type="term" value="F:3'-5' exonuclease activity"/>
    <property type="evidence" value="ECO:0000314"/>
    <property type="project" value="UniProtKB"/>
</dbReference>
<dbReference type="GO" id="GO:0160002">
    <property type="term" value="F:ADP-D-ribose modification-dependent protein binding"/>
    <property type="evidence" value="ECO:0000314"/>
    <property type="project" value="UniProtKB"/>
</dbReference>
<dbReference type="GO" id="GO:0004520">
    <property type="term" value="F:DNA endonuclease activity"/>
    <property type="evidence" value="ECO:0000314"/>
    <property type="project" value="UniProtKB"/>
</dbReference>
<dbReference type="GO" id="GO:0003906">
    <property type="term" value="F:DNA-(apurinic or apyrimidinic site) endonuclease activity"/>
    <property type="evidence" value="ECO:0000314"/>
    <property type="project" value="UniProtKB"/>
</dbReference>
<dbReference type="GO" id="GO:0042393">
    <property type="term" value="F:histone binding"/>
    <property type="evidence" value="ECO:0000314"/>
    <property type="project" value="UniProtKB"/>
</dbReference>
<dbReference type="GO" id="GO:0140713">
    <property type="term" value="F:histone chaperone activity"/>
    <property type="evidence" value="ECO:0000314"/>
    <property type="project" value="UniProtKB"/>
</dbReference>
<dbReference type="GO" id="GO:0000166">
    <property type="term" value="F:nucleotide binding"/>
    <property type="evidence" value="ECO:0000314"/>
    <property type="project" value="UniProtKB"/>
</dbReference>
<dbReference type="GO" id="GO:0072572">
    <property type="term" value="F:poly-ADP-D-ribose binding"/>
    <property type="evidence" value="ECO:0000314"/>
    <property type="project" value="UniProtKB"/>
</dbReference>
<dbReference type="GO" id="GO:0044183">
    <property type="term" value="F:protein folding chaperone"/>
    <property type="evidence" value="ECO:0000269"/>
    <property type="project" value="DisProt"/>
</dbReference>
<dbReference type="GO" id="GO:0008270">
    <property type="term" value="F:zinc ion binding"/>
    <property type="evidence" value="ECO:0007669"/>
    <property type="project" value="UniProtKB-KW"/>
</dbReference>
<dbReference type="GO" id="GO:0006974">
    <property type="term" value="P:DNA damage response"/>
    <property type="evidence" value="ECO:0000314"/>
    <property type="project" value="UniProtKB"/>
</dbReference>
<dbReference type="GO" id="GO:0006281">
    <property type="term" value="P:DNA repair"/>
    <property type="evidence" value="ECO:0000314"/>
    <property type="project" value="UniProt"/>
</dbReference>
<dbReference type="GO" id="GO:0140861">
    <property type="term" value="P:DNA repair-dependent chromatin remodeling"/>
    <property type="evidence" value="ECO:0000314"/>
    <property type="project" value="UniProtKB"/>
</dbReference>
<dbReference type="GO" id="GO:0006302">
    <property type="term" value="P:double-strand break repair"/>
    <property type="evidence" value="ECO:0000315"/>
    <property type="project" value="UniProtKB"/>
</dbReference>
<dbReference type="GO" id="GO:0006303">
    <property type="term" value="P:double-strand break repair via nonhomologous end joining"/>
    <property type="evidence" value="ECO:0000315"/>
    <property type="project" value="UniProtKB"/>
</dbReference>
<dbReference type="GO" id="GO:0007566">
    <property type="term" value="P:embryo implantation"/>
    <property type="evidence" value="ECO:0000250"/>
    <property type="project" value="UniProtKB"/>
</dbReference>
<dbReference type="GO" id="GO:0071168">
    <property type="term" value="P:protein localization to chromatin"/>
    <property type="evidence" value="ECO:0000314"/>
    <property type="project" value="UniProt"/>
</dbReference>
<dbReference type="GO" id="GO:0010717">
    <property type="term" value="P:regulation of epithelial to mesenchymal transition"/>
    <property type="evidence" value="ECO:0000250"/>
    <property type="project" value="UniProtKB"/>
</dbReference>
<dbReference type="GO" id="GO:0045191">
    <property type="term" value="P:regulation of isotype switching"/>
    <property type="evidence" value="ECO:0007669"/>
    <property type="project" value="Ensembl"/>
</dbReference>
<dbReference type="GO" id="GO:0000012">
    <property type="term" value="P:single strand break repair"/>
    <property type="evidence" value="ECO:0000315"/>
    <property type="project" value="UniProtKB"/>
</dbReference>
<dbReference type="CDD" id="cd22717">
    <property type="entry name" value="FHA_APLF"/>
    <property type="match status" value="1"/>
</dbReference>
<dbReference type="DisProt" id="DP01465"/>
<dbReference type="FunFam" id="2.60.200.20:FF:000026">
    <property type="entry name" value="Aprataxin and PNKP like factor"/>
    <property type="match status" value="1"/>
</dbReference>
<dbReference type="Gene3D" id="2.60.200.20">
    <property type="match status" value="1"/>
</dbReference>
<dbReference type="InterPro" id="IPR039253">
    <property type="entry name" value="APLF"/>
</dbReference>
<dbReference type="InterPro" id="IPR019406">
    <property type="entry name" value="APLF_PBZ"/>
</dbReference>
<dbReference type="InterPro" id="IPR041388">
    <property type="entry name" value="FHA_2"/>
</dbReference>
<dbReference type="InterPro" id="IPR008984">
    <property type="entry name" value="SMAD_FHA_dom_sf"/>
</dbReference>
<dbReference type="PANTHER" id="PTHR21315:SF2">
    <property type="entry name" value="APRATAXIN AND PNK-LIKE FACTOR"/>
    <property type="match status" value="1"/>
</dbReference>
<dbReference type="PANTHER" id="PTHR21315">
    <property type="entry name" value="APRATAXIN AND PNK-LIKE FACTOR-RELATED"/>
    <property type="match status" value="1"/>
</dbReference>
<dbReference type="Pfam" id="PF17913">
    <property type="entry name" value="FHA_2"/>
    <property type="match status" value="1"/>
</dbReference>
<dbReference type="Pfam" id="PF10283">
    <property type="entry name" value="zf-CCHH"/>
    <property type="match status" value="2"/>
</dbReference>
<dbReference type="SUPFAM" id="SSF49879">
    <property type="entry name" value="SMAD/FHA domain"/>
    <property type="match status" value="1"/>
</dbReference>
<protein>
    <recommendedName>
        <fullName evidence="17">Aprataxin and PNK-like factor</fullName>
        <ecNumber evidence="5">3.1.-.-</ecNumber>
    </recommendedName>
    <alternativeName>
        <fullName evidence="20">Apurinic-apyrimidinic endonuclease APLF</fullName>
    </alternativeName>
    <alternativeName>
        <fullName evidence="18">PNK and APTX-like FHA domain-containing protein</fullName>
    </alternativeName>
    <alternativeName>
        <fullName evidence="19">XRCC1-interacting protein 1</fullName>
    </alternativeName>
</protein>
<organism>
    <name type="scientific">Homo sapiens</name>
    <name type="common">Human</name>
    <dbReference type="NCBI Taxonomy" id="9606"/>
    <lineage>
        <taxon>Eukaryota</taxon>
        <taxon>Metazoa</taxon>
        <taxon>Chordata</taxon>
        <taxon>Craniata</taxon>
        <taxon>Vertebrata</taxon>
        <taxon>Euteleostomi</taxon>
        <taxon>Mammalia</taxon>
        <taxon>Eutheria</taxon>
        <taxon>Euarchontoglires</taxon>
        <taxon>Primates</taxon>
        <taxon>Haplorrhini</taxon>
        <taxon>Catarrhini</taxon>
        <taxon>Hominidae</taxon>
        <taxon>Homo</taxon>
    </lineage>
</organism>
<keyword id="KW-0002">3D-structure</keyword>
<keyword id="KW-0013">ADP-ribosylation</keyword>
<keyword id="KW-0158">Chromosome</keyword>
<keyword id="KW-0175">Coiled coil</keyword>
<keyword id="KW-0963">Cytoplasm</keyword>
<keyword id="KW-0227">DNA damage</keyword>
<keyword id="KW-0234">DNA repair</keyword>
<keyword id="KW-0378">Hydrolase</keyword>
<keyword id="KW-0479">Metal-binding</keyword>
<keyword id="KW-0547">Nucleotide-binding</keyword>
<keyword id="KW-0539">Nucleus</keyword>
<keyword id="KW-0597">Phosphoprotein</keyword>
<keyword id="KW-1267">Proteomics identification</keyword>
<keyword id="KW-1185">Reference proteome</keyword>
<keyword id="KW-0677">Repeat</keyword>
<keyword id="KW-0862">Zinc</keyword>
<keyword id="KW-0863">Zinc-finger</keyword>
<reference key="1">
    <citation type="journal article" date="2004" name="Nat. Genet.">
        <title>Complete sequencing and characterization of 21,243 full-length human cDNAs.</title>
        <authorList>
            <person name="Ota T."/>
            <person name="Suzuki Y."/>
            <person name="Nishikawa T."/>
            <person name="Otsuki T."/>
            <person name="Sugiyama T."/>
            <person name="Irie R."/>
            <person name="Wakamatsu A."/>
            <person name="Hayashi K."/>
            <person name="Sato H."/>
            <person name="Nagai K."/>
            <person name="Kimura K."/>
            <person name="Makita H."/>
            <person name="Sekine M."/>
            <person name="Obayashi M."/>
            <person name="Nishi T."/>
            <person name="Shibahara T."/>
            <person name="Tanaka T."/>
            <person name="Ishii S."/>
            <person name="Yamamoto J."/>
            <person name="Saito K."/>
            <person name="Kawai Y."/>
            <person name="Isono Y."/>
            <person name="Nakamura Y."/>
            <person name="Nagahari K."/>
            <person name="Murakami K."/>
            <person name="Yasuda T."/>
            <person name="Iwayanagi T."/>
            <person name="Wagatsuma M."/>
            <person name="Shiratori A."/>
            <person name="Sudo H."/>
            <person name="Hosoiri T."/>
            <person name="Kaku Y."/>
            <person name="Kodaira H."/>
            <person name="Kondo H."/>
            <person name="Sugawara M."/>
            <person name="Takahashi M."/>
            <person name="Kanda K."/>
            <person name="Yokoi T."/>
            <person name="Furuya T."/>
            <person name="Kikkawa E."/>
            <person name="Omura Y."/>
            <person name="Abe K."/>
            <person name="Kamihara K."/>
            <person name="Katsuta N."/>
            <person name="Sato K."/>
            <person name="Tanikawa M."/>
            <person name="Yamazaki M."/>
            <person name="Ninomiya K."/>
            <person name="Ishibashi T."/>
            <person name="Yamashita H."/>
            <person name="Murakawa K."/>
            <person name="Fujimori K."/>
            <person name="Tanai H."/>
            <person name="Kimata M."/>
            <person name="Watanabe M."/>
            <person name="Hiraoka S."/>
            <person name="Chiba Y."/>
            <person name="Ishida S."/>
            <person name="Ono Y."/>
            <person name="Takiguchi S."/>
            <person name="Watanabe S."/>
            <person name="Yosida M."/>
            <person name="Hotuta T."/>
            <person name="Kusano J."/>
            <person name="Kanehori K."/>
            <person name="Takahashi-Fujii A."/>
            <person name="Hara H."/>
            <person name="Tanase T.-O."/>
            <person name="Nomura Y."/>
            <person name="Togiya S."/>
            <person name="Komai F."/>
            <person name="Hara R."/>
            <person name="Takeuchi K."/>
            <person name="Arita M."/>
            <person name="Imose N."/>
            <person name="Musashino K."/>
            <person name="Yuuki H."/>
            <person name="Oshima A."/>
            <person name="Sasaki N."/>
            <person name="Aotsuka S."/>
            <person name="Yoshikawa Y."/>
            <person name="Matsunawa H."/>
            <person name="Ichihara T."/>
            <person name="Shiohata N."/>
            <person name="Sano S."/>
            <person name="Moriya S."/>
            <person name="Momiyama H."/>
            <person name="Satoh N."/>
            <person name="Takami S."/>
            <person name="Terashima Y."/>
            <person name="Suzuki O."/>
            <person name="Nakagawa S."/>
            <person name="Senoh A."/>
            <person name="Mizoguchi H."/>
            <person name="Goto Y."/>
            <person name="Shimizu F."/>
            <person name="Wakebe H."/>
            <person name="Hishigaki H."/>
            <person name="Watanabe T."/>
            <person name="Sugiyama A."/>
            <person name="Takemoto M."/>
            <person name="Kawakami B."/>
            <person name="Yamazaki M."/>
            <person name="Watanabe K."/>
            <person name="Kumagai A."/>
            <person name="Itakura S."/>
            <person name="Fukuzumi Y."/>
            <person name="Fujimori Y."/>
            <person name="Komiyama M."/>
            <person name="Tashiro H."/>
            <person name="Tanigami A."/>
            <person name="Fujiwara T."/>
            <person name="Ono T."/>
            <person name="Yamada K."/>
            <person name="Fujii Y."/>
            <person name="Ozaki K."/>
            <person name="Hirao M."/>
            <person name="Ohmori Y."/>
            <person name="Kawabata A."/>
            <person name="Hikiji T."/>
            <person name="Kobatake N."/>
            <person name="Inagaki H."/>
            <person name="Ikema Y."/>
            <person name="Okamoto S."/>
            <person name="Okitani R."/>
            <person name="Kawakami T."/>
            <person name="Noguchi S."/>
            <person name="Itoh T."/>
            <person name="Shigeta K."/>
            <person name="Senba T."/>
            <person name="Matsumura K."/>
            <person name="Nakajima Y."/>
            <person name="Mizuno T."/>
            <person name="Morinaga M."/>
            <person name="Sasaki M."/>
            <person name="Togashi T."/>
            <person name="Oyama M."/>
            <person name="Hata H."/>
            <person name="Watanabe M."/>
            <person name="Komatsu T."/>
            <person name="Mizushima-Sugano J."/>
            <person name="Satoh T."/>
            <person name="Shirai Y."/>
            <person name="Takahashi Y."/>
            <person name="Nakagawa K."/>
            <person name="Okumura K."/>
            <person name="Nagase T."/>
            <person name="Nomura N."/>
            <person name="Kikuchi H."/>
            <person name="Masuho Y."/>
            <person name="Yamashita R."/>
            <person name="Nakai K."/>
            <person name="Yada T."/>
            <person name="Nakamura Y."/>
            <person name="Ohara O."/>
            <person name="Isogai T."/>
            <person name="Sugano S."/>
        </authorList>
    </citation>
    <scope>NUCLEOTIDE SEQUENCE [LARGE SCALE MRNA]</scope>
    <source>
        <tissue>Liver</tissue>
    </source>
</reference>
<reference key="2">
    <citation type="journal article" date="2005" name="Nature">
        <title>Generation and annotation of the DNA sequences of human chromosomes 2 and 4.</title>
        <authorList>
            <person name="Hillier L.W."/>
            <person name="Graves T.A."/>
            <person name="Fulton R.S."/>
            <person name="Fulton L.A."/>
            <person name="Pepin K.H."/>
            <person name="Minx P."/>
            <person name="Wagner-McPherson C."/>
            <person name="Layman D."/>
            <person name="Wylie K."/>
            <person name="Sekhon M."/>
            <person name="Becker M.C."/>
            <person name="Fewell G.A."/>
            <person name="Delehaunty K.D."/>
            <person name="Miner T.L."/>
            <person name="Nash W.E."/>
            <person name="Kremitzki C."/>
            <person name="Oddy L."/>
            <person name="Du H."/>
            <person name="Sun H."/>
            <person name="Bradshaw-Cordum H."/>
            <person name="Ali J."/>
            <person name="Carter J."/>
            <person name="Cordes M."/>
            <person name="Harris A."/>
            <person name="Isak A."/>
            <person name="van Brunt A."/>
            <person name="Nguyen C."/>
            <person name="Du F."/>
            <person name="Courtney L."/>
            <person name="Kalicki J."/>
            <person name="Ozersky P."/>
            <person name="Abbott S."/>
            <person name="Armstrong J."/>
            <person name="Belter E.A."/>
            <person name="Caruso L."/>
            <person name="Cedroni M."/>
            <person name="Cotton M."/>
            <person name="Davidson T."/>
            <person name="Desai A."/>
            <person name="Elliott G."/>
            <person name="Erb T."/>
            <person name="Fronick C."/>
            <person name="Gaige T."/>
            <person name="Haakenson W."/>
            <person name="Haglund K."/>
            <person name="Holmes A."/>
            <person name="Harkins R."/>
            <person name="Kim K."/>
            <person name="Kruchowski S.S."/>
            <person name="Strong C.M."/>
            <person name="Grewal N."/>
            <person name="Goyea E."/>
            <person name="Hou S."/>
            <person name="Levy A."/>
            <person name="Martinka S."/>
            <person name="Mead K."/>
            <person name="McLellan M.D."/>
            <person name="Meyer R."/>
            <person name="Randall-Maher J."/>
            <person name="Tomlinson C."/>
            <person name="Dauphin-Kohlberg S."/>
            <person name="Kozlowicz-Reilly A."/>
            <person name="Shah N."/>
            <person name="Swearengen-Shahid S."/>
            <person name="Snider J."/>
            <person name="Strong J.T."/>
            <person name="Thompson J."/>
            <person name="Yoakum M."/>
            <person name="Leonard S."/>
            <person name="Pearman C."/>
            <person name="Trani L."/>
            <person name="Radionenko M."/>
            <person name="Waligorski J.E."/>
            <person name="Wang C."/>
            <person name="Rock S.M."/>
            <person name="Tin-Wollam A.-M."/>
            <person name="Maupin R."/>
            <person name="Latreille P."/>
            <person name="Wendl M.C."/>
            <person name="Yang S.-P."/>
            <person name="Pohl C."/>
            <person name="Wallis J.W."/>
            <person name="Spieth J."/>
            <person name="Bieri T.A."/>
            <person name="Berkowicz N."/>
            <person name="Nelson J.O."/>
            <person name="Osborne J."/>
            <person name="Ding L."/>
            <person name="Meyer R."/>
            <person name="Sabo A."/>
            <person name="Shotland Y."/>
            <person name="Sinha P."/>
            <person name="Wohldmann P.E."/>
            <person name="Cook L.L."/>
            <person name="Hickenbotham M.T."/>
            <person name="Eldred J."/>
            <person name="Williams D."/>
            <person name="Jones T.A."/>
            <person name="She X."/>
            <person name="Ciccarelli F.D."/>
            <person name="Izaurralde E."/>
            <person name="Taylor J."/>
            <person name="Schmutz J."/>
            <person name="Myers R.M."/>
            <person name="Cox D.R."/>
            <person name="Huang X."/>
            <person name="McPherson J.D."/>
            <person name="Mardis E.R."/>
            <person name="Clifton S.W."/>
            <person name="Warren W.C."/>
            <person name="Chinwalla A.T."/>
            <person name="Eddy S.R."/>
            <person name="Marra M.A."/>
            <person name="Ovcharenko I."/>
            <person name="Furey T.S."/>
            <person name="Miller W."/>
            <person name="Eichler E.E."/>
            <person name="Bork P."/>
            <person name="Suyama M."/>
            <person name="Torrents D."/>
            <person name="Waterston R.H."/>
            <person name="Wilson R.K."/>
        </authorList>
    </citation>
    <scope>NUCLEOTIDE SEQUENCE [LARGE SCALE GENOMIC DNA]</scope>
</reference>
<reference key="3">
    <citation type="journal article" date="2004" name="Genome Res.">
        <title>The status, quality, and expansion of the NIH full-length cDNA project: the Mammalian Gene Collection (MGC).</title>
        <authorList>
            <consortium name="The MGC Project Team"/>
        </authorList>
    </citation>
    <scope>NUCLEOTIDE SEQUENCE [LARGE SCALE MRNA]</scope>
    <source>
        <tissue>Testis</tissue>
    </source>
</reference>
<reference key="4">
    <citation type="journal article" date="2007" name="EMBO J.">
        <title>A novel human AP endonuclease with conserved zinc-finger-like motifs involved in DNA strand break responses.</title>
        <authorList>
            <person name="Kanno S."/>
            <person name="Kuzuoka H."/>
            <person name="Sasao S."/>
            <person name="Hong Z."/>
            <person name="Lan L."/>
            <person name="Nakajima S."/>
            <person name="Yasui A."/>
        </authorList>
    </citation>
    <scope>FUNCTION</scope>
    <scope>CATALYTIC ACTIVITY</scope>
    <scope>SUBCELLULAR LOCATION</scope>
    <scope>POLY-ADP-RIBOSYLATION</scope>
    <scope>INTERACTION WITH LIG4; PARP1; XRCC4 AND XRCC5</scope>
</reference>
<reference key="5">
    <citation type="journal article" date="2007" name="J. Biol. Chem.">
        <title>Human Xip1 (C2orf13) is a novel regulator of cellular responses to DNA strand breaks.</title>
        <authorList>
            <person name="Bekker-Jensen S."/>
            <person name="Fugger K."/>
            <person name="Danielsen J.R."/>
            <person name="Gromova I."/>
            <person name="Sehested M."/>
            <person name="Celis J."/>
            <person name="Bartek J."/>
            <person name="Lukas J."/>
            <person name="Mailand N."/>
        </authorList>
    </citation>
    <scope>SUBCELLULAR LOCATION</scope>
    <scope>INTERACTION WITH XRCC1</scope>
    <scope>PHOSPHORYLATION AT SER-116</scope>
    <scope>MUTAGENESIS OF SER-116</scope>
</reference>
<reference key="6">
    <citation type="journal article" date="2007" name="Mol. Cell. Biol.">
        <title>APLF (C2orf13) is a novel human protein involved in the cellular response to chromosomal DNA strand breaks.</title>
        <authorList>
            <person name="Iles N."/>
            <person name="Rulten S."/>
            <person name="El-Khamisy S.F."/>
            <person name="Caldecott K.W."/>
        </authorList>
    </citation>
    <scope>FUNCTION</scope>
    <scope>INTERACTION WITH PARP1; XRCC1; XRCC4 AND XRCC5</scope>
    <scope>SUBCELLULAR LOCATION</scope>
    <scope>PHOSPHORYLATION</scope>
</reference>
<reference key="7">
    <citation type="journal article" date="2008" name="DNA Repair">
        <title>APLF (C2orf13) facilitates nonhomologous end-joining and undergoes ATM-dependent hyperphosphorylation following ionizing radiation.</title>
        <authorList>
            <person name="Macrae C.J."/>
            <person name="McCulloch R.D."/>
            <person name="Ylanko J."/>
            <person name="Durocher D."/>
            <person name="Koch C.A."/>
        </authorList>
    </citation>
    <scope>INTERACTION WITH XRCC4</scope>
    <scope>PHOSPHORYLATION</scope>
</reference>
<reference key="8">
    <citation type="journal article" date="2008" name="Mol. Cell. Biol.">
        <title>APLF (C2orf13) is a novel component of poly(ADP-ribose) signaling in mammalian cells.</title>
        <authorList>
            <person name="Rulten S.L."/>
            <person name="Cortes-Ledesma F."/>
            <person name="Guo L."/>
            <person name="Iles N.J."/>
            <person name="Caldecott K.W."/>
        </authorList>
    </citation>
    <scope>SUBCELLULAR LOCATION</scope>
    <scope>ADP-RIBOSE-BINDING</scope>
</reference>
<reference key="9">
    <citation type="journal article" date="2008" name="Nature">
        <title>Poly(ADP-ribose)-binding zinc finger motifs in DNA repair/checkpoint proteins.</title>
        <authorList>
            <person name="Ahel I."/>
            <person name="Ahel D."/>
            <person name="Matsusaka T."/>
            <person name="Clark A.J."/>
            <person name="Pines J."/>
            <person name="Boulton S.J."/>
            <person name="West S.C."/>
        </authorList>
    </citation>
    <scope>SUBCELLULAR LOCATION</scope>
    <scope>DOMAIN PBZ-TYPE</scope>
    <scope>POLY-ADP-RIBOSYLATION</scope>
    <scope>ADP-RIBOSE-BINDING</scope>
    <scope>MUTAGENESIS OF ARG-376; CYS-379; CYS-385; CYS-421 AND CYS-427</scope>
</reference>
<reference key="10">
    <citation type="journal article" date="2011" name="Mol. Cell">
        <title>PARP-3 and APLF function together to accelerate nonhomologous end-joining.</title>
        <authorList>
            <person name="Rulten S.L."/>
            <person name="Fisher A.E."/>
            <person name="Robert I."/>
            <person name="Zuma M.C."/>
            <person name="Rouleau M."/>
            <person name="Ju L."/>
            <person name="Poirier G."/>
            <person name="Reina-San-Martin B."/>
            <person name="Caldecott K.W."/>
        </authorList>
    </citation>
    <scope>FUNCTION</scope>
    <scope>SUBCELLULAR LOCATION</scope>
    <scope>ADP-RIBOSE-BINDING</scope>
</reference>
<reference key="11">
    <citation type="journal article" date="2011" name="Mol. Cell">
        <title>DNA repair factor APLF is a histone chaperone.</title>
        <authorList>
            <person name="Mehrotra P.V."/>
            <person name="Ahel D."/>
            <person name="Ryan D.P."/>
            <person name="Weston R."/>
            <person name="Wiechens N."/>
            <person name="Kraehenbuehl R."/>
            <person name="Owen-Hughes T."/>
            <person name="Ahel I."/>
        </authorList>
    </citation>
    <scope>FUNCTION</scope>
    <scope>SUBCELLULAR LOCATION</scope>
    <scope>DOMAIN</scope>
    <scope>MOTIF</scope>
    <scope>INTERACTION WITH HISTONES H3-H4</scope>
    <scope>MUTAGENESIS OF ARG-376; CYS-379; CYS-385; CYS-421; CYS-427; GLU-477 AND TRP-485</scope>
</reference>
<reference key="12">
    <citation type="journal article" date="2013" name="J. Biol. Chem.">
        <title>Identification and functional characterization of a Ku-binding motif in aprataxin polynucleotide kinase/phosphatase-like factor (APLF).</title>
        <authorList>
            <person name="Shirodkar P."/>
            <person name="Fenton A.L."/>
            <person name="Meng L."/>
            <person name="Koch C.A."/>
        </authorList>
    </citation>
    <scope>FUNCTION</scope>
    <scope>SUBCELLULAR LOCATION</scope>
    <scope>INTERACTION WITH XRCC5 AND XRCC6</scope>
    <scope>DOMAIN</scope>
    <scope>MUTAGENESIS OF ARG-27; 182-ARG--ARG-184; ARG-182; ARG-184; 189-TRP--LEU-191; TRP-189; MET-190 AND LEU-191</scope>
</reference>
<reference key="13">
    <citation type="journal article" date="2016" name="Nat. Commun.">
        <title>The Ku-binding motif is a conserved module for recruitment and stimulation of non-homologous end-joining proteins.</title>
        <authorList>
            <person name="Grundy G.J."/>
            <person name="Rulten S.L."/>
            <person name="Arribas-Bosacoma R."/>
            <person name="Davidson K."/>
            <person name="Kozik Z."/>
            <person name="Oliver A.W."/>
            <person name="Pearl L.H."/>
            <person name="Caldecott K.W."/>
        </authorList>
    </citation>
    <scope>DOMAIN</scope>
    <scope>SUBCELLULAR LOCATION</scope>
</reference>
<reference key="14">
    <citation type="journal article" date="2018" name="Nat. Commun.">
        <title>PARP2 mediates branched poly ADP-ribosylation in response to DNA damage.</title>
        <authorList>
            <person name="Chen Q."/>
            <person name="Kassab M.A."/>
            <person name="Dantzer F."/>
            <person name="Yu X."/>
        </authorList>
    </citation>
    <scope>FUNCTION</scope>
    <scope>DOMAIN</scope>
</reference>
<reference key="15">
    <citation type="journal article" date="2018" name="Nucleic Acids Res.">
        <title>DNA repair factor APLF acts as a H2A-H2B histone chaperone through binding its DNA interaction surface.</title>
        <authorList>
            <person name="Corbeski I."/>
            <person name="Dolinar K."/>
            <person name="Wienk H."/>
            <person name="Boelens R."/>
            <person name="van Ingen H."/>
        </authorList>
    </citation>
    <scope>FUNCTION</scope>
    <scope>DOMAIN</scope>
    <scope>INTERACTION WITH HISTONES H2A AND H2B</scope>
    <scope>MUTAGENESIS OF GLU-477 AND TRP-485</scope>
</reference>
<reference key="16">
    <citation type="journal article" date="2010" name="Nat. Struct. Mol. Biol.">
        <title>Solution structures of the two PBZ domains from human APLF and their interaction with poly(ADP-ribose).</title>
        <authorList>
            <person name="Eustermann S."/>
            <person name="Brockmann C."/>
            <person name="Mehrotra P.V."/>
            <person name="Yang J.C."/>
            <person name="Loakes D."/>
            <person name="West S.C."/>
            <person name="Ahel I."/>
            <person name="Neuhaus D."/>
        </authorList>
    </citation>
    <scope>STRUCTURE BY NMR OF 368-451 ALONE AND IN COMPLEX WITH ADP-RIBOSE ANALOG</scope>
    <scope>POLY-ADP-RIBOSE BINDING SITES</scope>
</reference>
<reference key="17">
    <citation type="journal article" date="2010" name="Proc. Natl. Acad. Sci. U.S.A.">
        <title>Structure and identification of ADP-ribose recognition motifs of APLF and role in the DNA damage response.</title>
        <authorList>
            <person name="Li G.Y."/>
            <person name="McCulloch R.D."/>
            <person name="Fenton A.L."/>
            <person name="Cheung M."/>
            <person name="Meng L."/>
            <person name="Ikura M."/>
            <person name="Koch C.A."/>
        </authorList>
    </citation>
    <scope>STRUCTURE BY NMR OF 360-448</scope>
    <scope>LINKER REGION</scope>
    <scope>POLY-ADP-RIBOSE BINDING SITES</scope>
</reference>
<reference evidence="23 24 25" key="18">
    <citation type="journal article" date="2020" name="DNA Repair">
        <title>Ligand binding characteristics of the Ku80 von Willebrand domain.</title>
        <authorList>
            <person name="Kim K."/>
            <person name="Min J."/>
            <person name="Kirby T.W."/>
            <person name="Gabel S.A."/>
            <person name="Pedersen L.C."/>
            <person name="London R.E."/>
        </authorList>
    </citation>
    <scope>X-RAY CRYSTALLOGRAPHY (1.51 ANGSTROMS) OF 179-194 IN COMPLEX WITH X.LAEVIS XRCC5</scope>
    <scope>INTERACTION WITH XRCC5</scope>
</reference>
<evidence type="ECO:0000250" key="1">
    <source>
        <dbReference type="UniProtKB" id="Q9D842"/>
    </source>
</evidence>
<evidence type="ECO:0000255" key="2"/>
<evidence type="ECO:0000256" key="3">
    <source>
        <dbReference type="SAM" id="MobiDB-lite"/>
    </source>
</evidence>
<evidence type="ECO:0000269" key="4">
    <source>
    </source>
</evidence>
<evidence type="ECO:0000269" key="5">
    <source>
    </source>
</evidence>
<evidence type="ECO:0000269" key="6">
    <source>
    </source>
</evidence>
<evidence type="ECO:0000269" key="7">
    <source>
    </source>
</evidence>
<evidence type="ECO:0000269" key="8">
    <source>
    </source>
</evidence>
<evidence type="ECO:0000269" key="9">
    <source>
    </source>
</evidence>
<evidence type="ECO:0000269" key="10">
    <source>
    </source>
</evidence>
<evidence type="ECO:0000269" key="11">
    <source>
    </source>
</evidence>
<evidence type="ECO:0000269" key="12">
    <source>
    </source>
</evidence>
<evidence type="ECO:0000269" key="13">
    <source>
    </source>
</evidence>
<evidence type="ECO:0000269" key="14">
    <source>
    </source>
</evidence>
<evidence type="ECO:0000269" key="15">
    <source>
    </source>
</evidence>
<evidence type="ECO:0000269" key="16">
    <source>
    </source>
</evidence>
<evidence type="ECO:0000303" key="17">
    <source>
    </source>
</evidence>
<evidence type="ECO:0000303" key="18">
    <source>
    </source>
</evidence>
<evidence type="ECO:0000303" key="19">
    <source>
    </source>
</evidence>
<evidence type="ECO:0000305" key="20"/>
<evidence type="ECO:0000305" key="21">
    <source>
    </source>
</evidence>
<evidence type="ECO:0000312" key="22">
    <source>
        <dbReference type="HGNC" id="HGNC:28724"/>
    </source>
</evidence>
<evidence type="ECO:0007744" key="23">
    <source>
        <dbReference type="PDB" id="6TYT"/>
    </source>
</evidence>
<evidence type="ECO:0007744" key="24">
    <source>
        <dbReference type="PDB" id="6TYW"/>
    </source>
</evidence>
<evidence type="ECO:0007744" key="25">
    <source>
        <dbReference type="PDB" id="6TYZ"/>
    </source>
</evidence>
<evidence type="ECO:0007829" key="26">
    <source>
        <dbReference type="PDB" id="2KQB"/>
    </source>
</evidence>
<evidence type="ECO:0007829" key="27">
    <source>
        <dbReference type="PDB" id="2KQC"/>
    </source>
</evidence>
<evidence type="ECO:0007829" key="28">
    <source>
        <dbReference type="PDB" id="5E50"/>
    </source>
</evidence>
<evidence type="ECO:0007829" key="29">
    <source>
        <dbReference type="PDB" id="5W7W"/>
    </source>
</evidence>
<evidence type="ECO:0007829" key="30">
    <source>
        <dbReference type="PDB" id="6TYZ"/>
    </source>
</evidence>
<gene>
    <name evidence="17 22" type="primary">APLF</name>
    <name evidence="22" type="synonym">C2orf13</name>
    <name evidence="18" type="synonym">PALF</name>
    <name evidence="19" type="synonym">XIP1</name>
</gene>
<name>APLF_HUMAN</name>
<proteinExistence type="evidence at protein level"/>
<comment type="function">
    <text evidence="1 4 5 10 11 12 14 15">Histone chaperone involved in single-strand and double-strand DNA break repair (PubMed:17353262, PubMed:17396150, PubMed:21211721, PubMed:21211722, PubMed:29905837, PubMed:30104678). Recruited to sites of DNA damage through interaction with branched poly-ADP-ribose chains, a polymeric post-translational modification synthesized transiently at sites of chromosomal damage to accelerate DNA strand break repair reactions (PubMed:17353262, PubMed:17396150, PubMed:21211721, PubMed:30104678). Following recruitment to DNA damage sites, acts as a histone chaperone that mediates histone eviction during DNA repair and promotes recruitment of histone variant MACROH2A1 (PubMed:21211722, PubMed:29905837, PubMed:30104678). Also has a nuclease activity: displays apurinic-apyrimidinic (AP) endonuclease and 3'-5' exonuclease activities in vitro (PubMed:17353262, PubMed:17396150). Also able to introduce nicks at hydroxyuracil and other types of pyrimidine base damage (PubMed:17353262, PubMed:17396150). Together with PARP3, promotes the retention of the LIG4-XRCC4 complex on chromatin and accelerate DNA ligation during non-homologous end-joining (NHEJ) (PubMed:21211721, PubMed:23689425). Also acts as a negative regulator of cell pluripotency by promoting histone exchange (By similarity). Required for the embryo implantation during the epithelial to mesenchymal transition in females (By similarity).</text>
</comment>
<comment type="subunit">
    <text evidence="4 5 6 7 11 12 14 16">Interacts with LIG4 (PubMed:17396150). Interacts with PARP1 (PubMed:17353262, PubMed:17396150). Interacts with XRCC4 (PubMed:17353262, PubMed:17396150, PubMed:18077224). Interacts (via KBM motif) with XRCC5 and XRCC6; promoting recruitment to DNA damage sites (PubMed:23689425, PubMed:31733588). Interacts with XRCC1 (PubMed:17353262, PubMed:17507382). Interacts (via C-terminal disordered region) with histones; interacts with histone H2A, H2B and H3-H4 (PubMed:21211722, PubMed:29905837).</text>
</comment>
<comment type="interaction">
    <interactant intactId="EBI-1256044">
        <id>Q8IW19</id>
    </interactant>
    <interactant intactId="EBI-10172181">
        <id>Q53SE7</id>
        <label>FLJ13057</label>
    </interactant>
    <organismsDiffer>false</organismsDiffer>
    <experiments>3</experiments>
</comment>
<comment type="interaction">
    <interactant intactId="EBI-1256044">
        <id>Q8IW19</id>
    </interactant>
    <interactant intactId="EBI-847896">
        <id>P49917</id>
        <label>LIG4</label>
    </interactant>
    <organismsDiffer>false</organismsDiffer>
    <experiments>4</experiments>
</comment>
<comment type="interaction">
    <interactant intactId="EBI-1256044">
        <id>Q8IW19</id>
    </interactant>
    <interactant intactId="EBI-355676">
        <id>P09874</id>
        <label>PARP1</label>
    </interactant>
    <organismsDiffer>false</organismsDiffer>
    <experiments>9</experiments>
</comment>
<comment type="interaction">
    <interactant intactId="EBI-1256044">
        <id>Q8IW19</id>
    </interactant>
    <interactant intactId="EBI-2795348">
        <id>Q9UGN5</id>
        <label>PARP2</label>
    </interactant>
    <organismsDiffer>false</organismsDiffer>
    <experiments>2</experiments>
</comment>
<comment type="interaction">
    <interactant intactId="EBI-1256044">
        <id>Q8IW19</id>
    </interactant>
    <interactant intactId="EBI-947466">
        <id>P18887</id>
        <label>XRCC1</label>
    </interactant>
    <organismsDiffer>false</organismsDiffer>
    <experiments>12</experiments>
</comment>
<comment type="interaction">
    <interactant intactId="EBI-1256044">
        <id>Q8IW19</id>
    </interactant>
    <interactant intactId="EBI-717592">
        <id>Q13426</id>
        <label>XRCC4</label>
    </interactant>
    <organismsDiffer>false</organismsDiffer>
    <experiments>6</experiments>
</comment>
<comment type="interaction">
    <interactant intactId="EBI-1256044">
        <id>Q8IW19</id>
    </interactant>
    <interactant intactId="EBI-357997">
        <id>P13010</id>
        <label>XRCC5</label>
    </interactant>
    <organismsDiffer>false</organismsDiffer>
    <experiments>15</experiments>
</comment>
<comment type="subcellular location">
    <subcellularLocation>
        <location evidence="4 5 6 12">Nucleus</location>
    </subcellularLocation>
    <subcellularLocation>
        <location evidence="8 9 10 11 12 13">Chromosome</location>
    </subcellularLocation>
    <subcellularLocation>
        <location evidence="4">Cytoplasm</location>
        <location evidence="4">Cytosol</location>
    </subcellularLocation>
    <text evidence="8 9 10 11 12">Localizes to DNA damage sites (PubMed:18172500, PubMed:18474613, PubMed:21211721, PubMed:21211722, PubMed:23689425). Accumulates at single-strand breaks and double-strand breaks via the PBZ-type zinc fingers (PubMed:18172500).</text>
</comment>
<comment type="domain">
    <text evidence="8 9 15">The PBZ-type zinc fingers (also named CYR) mediate non-covalent poly-ADP-ribose-binding (PubMed:18172500, PubMed:18474613, PubMed:30104678). Specifically recognizes branched poly-ADP-ribose chains generated by PARP2 (PubMed:30104678). Poly-ADP-ribose-binding is dependent on the presence of zinc and promotes its recruitment to DNA damage sites (PubMed:18172500, PubMed:18474613).</text>
</comment>
<comment type="domain">
    <text evidence="12 13">The KBM (Ku-binding motif) mediates interaction with XRCC5/Ku80 and XRCC6/Ku70 and recruitment to DNA damage sites.</text>
</comment>
<comment type="domain">
    <text evidence="8">The FHA-like domain mediates interaction with XRCC1 and XRCC4.</text>
</comment>
<comment type="domain">
    <text evidence="11 14">The NAP1L motif is required for the histone chaperone activity.</text>
</comment>
<comment type="PTM">
    <text evidence="5 8">Poly-ADP-ribosylated. In addition to binding non covalently poly-ADP-ribose via its PBZ-type zinc fingers, the protein is also covalently poly-ADP-ribosylated by PARP1.</text>
</comment>
<comment type="PTM">
    <text evidence="4 6 7">Phosphorylated in an ATM-dependent manner upon double-strand DNA break.</text>
</comment>
<comment type="similarity">
    <text evidence="20">Belongs to the APLF family.</text>
</comment>
<comment type="sequence caution" evidence="20">
    <conflict type="erroneous initiation">
        <sequence resource="EMBL-CDS" id="AAY14945"/>
    </conflict>
</comment>
<sequence>MSGGFELQPRDGGPRVALAPGETVIGRGPLLGITDKRVSRRHAILEVAGGQLRIKPIHTNPCFYQSSEKSQLLPLKPNLWCYLNPGDSFSLLVDKYIFRILSIPSEVEMQCTLRNSQVLDEDNILNETPKSPVINLPHETTGASQLEGSTEIAKTQMTPTNSVSFLGENRDCNKQQPILAERKRILPTWMLAEHLSDQNLSVPAISGGNVIQGSGKEEICKDKSQLNTTQQGRRQLISSGSSENTSAEQDTGEECKNTDQEESTISSKEMPQSFSAITLSNTEMNNIKTNAQRNKLPIEELGKVSKHKIATKRTPHKEDEAMSCSENCSSAQGDSLQDESQGSHSESSSNPSNPETLHAKATDSVLQGSEGNKVKRTSCMYGANCYRKNPVHFQHFSHPGDSDYGGVQIVGQDETDDRPECPYGPSCYRKNPQHKIEYRHNTLPVRNVLDEDNDNVGQPNEYDLNDSFLDDEEEDYEPTDEDSDWEPGKEDEEKEDVEELLKEAKRFMKRK</sequence>